<organism>
    <name type="scientific">Arthrobacter sp. (strain FB24)</name>
    <dbReference type="NCBI Taxonomy" id="290399"/>
    <lineage>
        <taxon>Bacteria</taxon>
        <taxon>Bacillati</taxon>
        <taxon>Actinomycetota</taxon>
        <taxon>Actinomycetes</taxon>
        <taxon>Micrococcales</taxon>
        <taxon>Micrococcaceae</taxon>
        <taxon>Arthrobacter</taxon>
    </lineage>
</organism>
<dbReference type="EC" id="1.1.1.25" evidence="1"/>
<dbReference type="EMBL" id="CP000454">
    <property type="protein sequence ID" value="ABK05455.1"/>
    <property type="molecule type" value="Genomic_DNA"/>
</dbReference>
<dbReference type="RefSeq" id="WP_011693903.1">
    <property type="nucleotide sequence ID" value="NC_008541.1"/>
</dbReference>
<dbReference type="SMR" id="A0K2D5"/>
<dbReference type="STRING" id="290399.Arth_4080"/>
<dbReference type="KEGG" id="art:Arth_4080"/>
<dbReference type="eggNOG" id="COG0169">
    <property type="taxonomic scope" value="Bacteria"/>
</dbReference>
<dbReference type="HOGENOM" id="CLU_044063_4_3_11"/>
<dbReference type="OrthoDB" id="9776868at2"/>
<dbReference type="UniPathway" id="UPA00053">
    <property type="reaction ID" value="UER00087"/>
</dbReference>
<dbReference type="Proteomes" id="UP000000754">
    <property type="component" value="Chromosome"/>
</dbReference>
<dbReference type="GO" id="GO:0005829">
    <property type="term" value="C:cytosol"/>
    <property type="evidence" value="ECO:0007669"/>
    <property type="project" value="TreeGrafter"/>
</dbReference>
<dbReference type="GO" id="GO:0050661">
    <property type="term" value="F:NADP binding"/>
    <property type="evidence" value="ECO:0007669"/>
    <property type="project" value="TreeGrafter"/>
</dbReference>
<dbReference type="GO" id="GO:0004764">
    <property type="term" value="F:shikimate 3-dehydrogenase (NADP+) activity"/>
    <property type="evidence" value="ECO:0007669"/>
    <property type="project" value="UniProtKB-UniRule"/>
</dbReference>
<dbReference type="GO" id="GO:0008652">
    <property type="term" value="P:amino acid biosynthetic process"/>
    <property type="evidence" value="ECO:0007669"/>
    <property type="project" value="UniProtKB-KW"/>
</dbReference>
<dbReference type="GO" id="GO:0009073">
    <property type="term" value="P:aromatic amino acid family biosynthetic process"/>
    <property type="evidence" value="ECO:0007669"/>
    <property type="project" value="UniProtKB-KW"/>
</dbReference>
<dbReference type="GO" id="GO:0009423">
    <property type="term" value="P:chorismate biosynthetic process"/>
    <property type="evidence" value="ECO:0007669"/>
    <property type="project" value="UniProtKB-UniRule"/>
</dbReference>
<dbReference type="GO" id="GO:0019632">
    <property type="term" value="P:shikimate metabolic process"/>
    <property type="evidence" value="ECO:0007669"/>
    <property type="project" value="TreeGrafter"/>
</dbReference>
<dbReference type="CDD" id="cd01065">
    <property type="entry name" value="NAD_bind_Shikimate_DH"/>
    <property type="match status" value="1"/>
</dbReference>
<dbReference type="Gene3D" id="3.40.50.10860">
    <property type="entry name" value="Leucine Dehydrogenase, chain A, domain 1"/>
    <property type="match status" value="1"/>
</dbReference>
<dbReference type="Gene3D" id="3.40.50.720">
    <property type="entry name" value="NAD(P)-binding Rossmann-like Domain"/>
    <property type="match status" value="1"/>
</dbReference>
<dbReference type="HAMAP" id="MF_00222">
    <property type="entry name" value="Shikimate_DH_AroE"/>
    <property type="match status" value="1"/>
</dbReference>
<dbReference type="InterPro" id="IPR046346">
    <property type="entry name" value="Aminoacid_DH-like_N_sf"/>
</dbReference>
<dbReference type="InterPro" id="IPR036291">
    <property type="entry name" value="NAD(P)-bd_dom_sf"/>
</dbReference>
<dbReference type="InterPro" id="IPR041121">
    <property type="entry name" value="SDH_C"/>
</dbReference>
<dbReference type="InterPro" id="IPR013708">
    <property type="entry name" value="Shikimate_DH-bd_N"/>
</dbReference>
<dbReference type="InterPro" id="IPR022893">
    <property type="entry name" value="Shikimate_DH_fam"/>
</dbReference>
<dbReference type="NCBIfam" id="NF009201">
    <property type="entry name" value="PRK12549.1"/>
    <property type="match status" value="1"/>
</dbReference>
<dbReference type="PANTHER" id="PTHR21089:SF1">
    <property type="entry name" value="BIFUNCTIONAL 3-DEHYDROQUINATE DEHYDRATASE_SHIKIMATE DEHYDROGENASE, CHLOROPLASTIC"/>
    <property type="match status" value="1"/>
</dbReference>
<dbReference type="PANTHER" id="PTHR21089">
    <property type="entry name" value="SHIKIMATE DEHYDROGENASE"/>
    <property type="match status" value="1"/>
</dbReference>
<dbReference type="Pfam" id="PF18317">
    <property type="entry name" value="SDH_C"/>
    <property type="match status" value="1"/>
</dbReference>
<dbReference type="Pfam" id="PF08501">
    <property type="entry name" value="Shikimate_dh_N"/>
    <property type="match status" value="1"/>
</dbReference>
<dbReference type="SUPFAM" id="SSF53223">
    <property type="entry name" value="Aminoacid dehydrogenase-like, N-terminal domain"/>
    <property type="match status" value="1"/>
</dbReference>
<dbReference type="SUPFAM" id="SSF51735">
    <property type="entry name" value="NAD(P)-binding Rossmann-fold domains"/>
    <property type="match status" value="1"/>
</dbReference>
<accession>A0K2D5</accession>
<name>AROE_ARTS2</name>
<sequence length="293" mass="31189">MSNRAESFLVGLVGDGVMPSLTPHMHEREGDVQGLRYLYRPIDLLELGLPGESVGELLQSAHRMGFNGLNITHPCKQLVLDHLDEIAPDARRLGAVNTVIIRDGRFTGHNTDFSGFAAALASGLPDAKLDRVVQLGAGGAGSAVAYALLTAGVRHLDLVDTDAARCAERAAELAGFFPDSSVTARTTAELPQLMPLADGLVHCTPVGMAAHPGAPLDLSLLESRHWVADIVYRPIDTELVREARAKGCEVLDGGRMAVGQAADAFRIFTGLEADADRMRAHFLELVAAEEVTA</sequence>
<keyword id="KW-0028">Amino-acid biosynthesis</keyword>
<keyword id="KW-0057">Aromatic amino acid biosynthesis</keyword>
<keyword id="KW-0521">NADP</keyword>
<keyword id="KW-0560">Oxidoreductase</keyword>
<keyword id="KW-1185">Reference proteome</keyword>
<reference key="1">
    <citation type="journal article" date="2013" name="Stand. Genomic Sci.">
        <title>Complete genome sequence of Arthrobacter sp. strain FB24.</title>
        <authorList>
            <person name="Nakatsu C.H."/>
            <person name="Barabote R."/>
            <person name="Thompson S."/>
            <person name="Bruce D."/>
            <person name="Detter C."/>
            <person name="Brettin T."/>
            <person name="Han C."/>
            <person name="Beasley F."/>
            <person name="Chen W."/>
            <person name="Konopka A."/>
            <person name="Xie G."/>
        </authorList>
    </citation>
    <scope>NUCLEOTIDE SEQUENCE [LARGE SCALE GENOMIC DNA]</scope>
    <source>
        <strain>FB24</strain>
    </source>
</reference>
<gene>
    <name evidence="1" type="primary">aroE</name>
    <name type="ordered locus">Arth_4080</name>
</gene>
<protein>
    <recommendedName>
        <fullName evidence="1">Shikimate dehydrogenase (NADP(+))</fullName>
        <shortName evidence="1">SDH</shortName>
        <ecNumber evidence="1">1.1.1.25</ecNumber>
    </recommendedName>
</protein>
<comment type="function">
    <text evidence="1">Involved in the biosynthesis of the chorismate, which leads to the biosynthesis of aromatic amino acids. Catalyzes the reversible NADPH linked reduction of 3-dehydroshikimate (DHSA) to yield shikimate (SA).</text>
</comment>
<comment type="catalytic activity">
    <reaction evidence="1">
        <text>shikimate + NADP(+) = 3-dehydroshikimate + NADPH + H(+)</text>
        <dbReference type="Rhea" id="RHEA:17737"/>
        <dbReference type="ChEBI" id="CHEBI:15378"/>
        <dbReference type="ChEBI" id="CHEBI:16630"/>
        <dbReference type="ChEBI" id="CHEBI:36208"/>
        <dbReference type="ChEBI" id="CHEBI:57783"/>
        <dbReference type="ChEBI" id="CHEBI:58349"/>
        <dbReference type="EC" id="1.1.1.25"/>
    </reaction>
</comment>
<comment type="pathway">
    <text evidence="1">Metabolic intermediate biosynthesis; chorismate biosynthesis; chorismate from D-erythrose 4-phosphate and phosphoenolpyruvate: step 4/7.</text>
</comment>
<comment type="subunit">
    <text evidence="1">Homodimer.</text>
</comment>
<comment type="similarity">
    <text evidence="1">Belongs to the shikimate dehydrogenase family.</text>
</comment>
<feature type="chain" id="PRO_0000325100" description="Shikimate dehydrogenase (NADP(+))">
    <location>
        <begin position="1"/>
        <end position="293"/>
    </location>
</feature>
<feature type="active site" description="Proton acceptor" evidence="1">
    <location>
        <position position="76"/>
    </location>
</feature>
<feature type="binding site" evidence="1">
    <location>
        <begin position="20"/>
        <end position="22"/>
    </location>
    <ligand>
        <name>shikimate</name>
        <dbReference type="ChEBI" id="CHEBI:36208"/>
    </ligand>
</feature>
<feature type="binding site" evidence="1">
    <location>
        <position position="72"/>
    </location>
    <ligand>
        <name>shikimate</name>
        <dbReference type="ChEBI" id="CHEBI:36208"/>
    </ligand>
</feature>
<feature type="binding site" evidence="1">
    <location>
        <position position="97"/>
    </location>
    <ligand>
        <name>shikimate</name>
        <dbReference type="ChEBI" id="CHEBI:36208"/>
    </ligand>
</feature>
<feature type="binding site" evidence="1">
    <location>
        <position position="112"/>
    </location>
    <ligand>
        <name>shikimate</name>
        <dbReference type="ChEBI" id="CHEBI:36208"/>
    </ligand>
</feature>
<feature type="binding site" evidence="1">
    <location>
        <begin position="136"/>
        <end position="140"/>
    </location>
    <ligand>
        <name>NADP(+)</name>
        <dbReference type="ChEBI" id="CHEBI:58349"/>
    </ligand>
</feature>
<feature type="binding site" evidence="1">
    <location>
        <position position="230"/>
    </location>
    <ligand>
        <name>NADP(+)</name>
        <dbReference type="ChEBI" id="CHEBI:58349"/>
    </ligand>
</feature>
<feature type="binding site" evidence="1">
    <location>
        <position position="232"/>
    </location>
    <ligand>
        <name>shikimate</name>
        <dbReference type="ChEBI" id="CHEBI:36208"/>
    </ligand>
</feature>
<feature type="binding site" evidence="1">
    <location>
        <position position="253"/>
    </location>
    <ligand>
        <name>NADP(+)</name>
        <dbReference type="ChEBI" id="CHEBI:58349"/>
    </ligand>
</feature>
<evidence type="ECO:0000255" key="1">
    <source>
        <dbReference type="HAMAP-Rule" id="MF_00222"/>
    </source>
</evidence>
<proteinExistence type="inferred from homology"/>